<gene>
    <name type="primary">PFS2</name>
    <name type="ordered locus">CAGL0M04081g</name>
</gene>
<protein>
    <recommendedName>
        <fullName>Polyadenylation factor subunit 2</fullName>
    </recommendedName>
</protein>
<name>PFS2_CANGA</name>
<sequence length="455" mass="51570">MDQSAAVEGVPQKKYLTLRRSVDVSSSYNRLYYLKKHGLSLPPIEPETSFTANIMPPDAYKRNDRIVNLPTKFTHLSSNKVKHVIPAIQWSPEGRRLIVATFSGEFSLWNGSSFTFETIMQAHDTSVTTMKYSHAGDWMISGDADGTIKIWQPNFNMVKELDRIHTEGIRDVAFSNNDSKFVTCSDDNILKIWNFSNGQQERVLSGHHWDVRSCDWHPELGLIVSGSKDNLVKLWDPRSGQCVSTLLKFKHTVLKTRFQPTKGNLLAAISKDKSCRVFDLRASMNELMCVRDEVDFMELEWSTINESMFTVGCYDGSLKHFDLGQDTEKPIHIIPFAHEKCISAIAYNPVGHILATAAKDRTIRFWTRARPVDPNAFDDPTYNNKKMTGWFFGINNDINAVREKSEYGAAPPPASTAFPQQTQYNNNISRVPEIKEPTPTTDKEQRTSILPGLSI</sequence>
<reference key="1">
    <citation type="journal article" date="2004" name="Nature">
        <title>Genome evolution in yeasts.</title>
        <authorList>
            <person name="Dujon B."/>
            <person name="Sherman D."/>
            <person name="Fischer G."/>
            <person name="Durrens P."/>
            <person name="Casaregola S."/>
            <person name="Lafontaine I."/>
            <person name="de Montigny J."/>
            <person name="Marck C."/>
            <person name="Neuveglise C."/>
            <person name="Talla E."/>
            <person name="Goffard N."/>
            <person name="Frangeul L."/>
            <person name="Aigle M."/>
            <person name="Anthouard V."/>
            <person name="Babour A."/>
            <person name="Barbe V."/>
            <person name="Barnay S."/>
            <person name="Blanchin S."/>
            <person name="Beckerich J.-M."/>
            <person name="Beyne E."/>
            <person name="Bleykasten C."/>
            <person name="Boisrame A."/>
            <person name="Boyer J."/>
            <person name="Cattolico L."/>
            <person name="Confanioleri F."/>
            <person name="de Daruvar A."/>
            <person name="Despons L."/>
            <person name="Fabre E."/>
            <person name="Fairhead C."/>
            <person name="Ferry-Dumazet H."/>
            <person name="Groppi A."/>
            <person name="Hantraye F."/>
            <person name="Hennequin C."/>
            <person name="Jauniaux N."/>
            <person name="Joyet P."/>
            <person name="Kachouri R."/>
            <person name="Kerrest A."/>
            <person name="Koszul R."/>
            <person name="Lemaire M."/>
            <person name="Lesur I."/>
            <person name="Ma L."/>
            <person name="Muller H."/>
            <person name="Nicaud J.-M."/>
            <person name="Nikolski M."/>
            <person name="Oztas S."/>
            <person name="Ozier-Kalogeropoulos O."/>
            <person name="Pellenz S."/>
            <person name="Potier S."/>
            <person name="Richard G.-F."/>
            <person name="Straub M.-L."/>
            <person name="Suleau A."/>
            <person name="Swennen D."/>
            <person name="Tekaia F."/>
            <person name="Wesolowski-Louvel M."/>
            <person name="Westhof E."/>
            <person name="Wirth B."/>
            <person name="Zeniou-Meyer M."/>
            <person name="Zivanovic Y."/>
            <person name="Bolotin-Fukuhara M."/>
            <person name="Thierry A."/>
            <person name="Bouchier C."/>
            <person name="Caudron B."/>
            <person name="Scarpelli C."/>
            <person name="Gaillardin C."/>
            <person name="Weissenbach J."/>
            <person name="Wincker P."/>
            <person name="Souciet J.-L."/>
        </authorList>
    </citation>
    <scope>NUCLEOTIDE SEQUENCE [LARGE SCALE GENOMIC DNA]</scope>
    <source>
        <strain>ATCC 2001 / BCRC 20586 / JCM 3761 / NBRC 0622 / NRRL Y-65 / CBS 138</strain>
    </source>
</reference>
<feature type="chain" id="PRO_0000238499" description="Polyadenylation factor subunit 2">
    <location>
        <begin position="1"/>
        <end position="455"/>
    </location>
</feature>
<feature type="repeat" description="WD 1">
    <location>
        <begin position="80"/>
        <end position="119"/>
    </location>
</feature>
<feature type="repeat" description="WD 2">
    <location>
        <begin position="122"/>
        <end position="162"/>
    </location>
</feature>
<feature type="repeat" description="WD 3">
    <location>
        <begin position="164"/>
        <end position="203"/>
    </location>
</feature>
<feature type="repeat" description="WD 4">
    <location>
        <begin position="206"/>
        <end position="245"/>
    </location>
</feature>
<feature type="repeat" description="WD 5">
    <location>
        <begin position="248"/>
        <end position="288"/>
    </location>
</feature>
<feature type="repeat" description="WD 6">
    <location>
        <begin position="291"/>
        <end position="331"/>
    </location>
</feature>
<feature type="repeat" description="WD 7">
    <location>
        <begin position="337"/>
        <end position="376"/>
    </location>
</feature>
<feature type="region of interest" description="Disordered" evidence="2">
    <location>
        <begin position="406"/>
        <end position="425"/>
    </location>
</feature>
<feature type="region of interest" description="Disordered" evidence="2">
    <location>
        <begin position="430"/>
        <end position="455"/>
    </location>
</feature>
<feature type="compositionally biased region" description="Basic and acidic residues" evidence="2">
    <location>
        <begin position="432"/>
        <end position="446"/>
    </location>
</feature>
<comment type="function">
    <text evidence="1">Required for 3'-end cleavage and polyadenylation of pre-mRNAs. Also involved in chromosome segregation where it has a role in chromosome attachment to the mitotic spindle (By similarity).</text>
</comment>
<comment type="subcellular location">
    <subcellularLocation>
        <location evidence="1">Nucleus</location>
    </subcellularLocation>
</comment>
<accession>Q6FJS0</accession>
<organism>
    <name type="scientific">Candida glabrata (strain ATCC 2001 / BCRC 20586 / JCM 3761 / NBRC 0622 / NRRL Y-65 / CBS 138)</name>
    <name type="common">Yeast</name>
    <name type="synonym">Nakaseomyces glabratus</name>
    <dbReference type="NCBI Taxonomy" id="284593"/>
    <lineage>
        <taxon>Eukaryota</taxon>
        <taxon>Fungi</taxon>
        <taxon>Dikarya</taxon>
        <taxon>Ascomycota</taxon>
        <taxon>Saccharomycotina</taxon>
        <taxon>Saccharomycetes</taxon>
        <taxon>Saccharomycetales</taxon>
        <taxon>Saccharomycetaceae</taxon>
        <taxon>Nakaseomyces</taxon>
    </lineage>
</organism>
<keyword id="KW-0159">Chromosome partition</keyword>
<keyword id="KW-0507">mRNA processing</keyword>
<keyword id="KW-0539">Nucleus</keyword>
<keyword id="KW-1185">Reference proteome</keyword>
<keyword id="KW-0677">Repeat</keyword>
<keyword id="KW-0853">WD repeat</keyword>
<evidence type="ECO:0000250" key="1"/>
<evidence type="ECO:0000256" key="2">
    <source>
        <dbReference type="SAM" id="MobiDB-lite"/>
    </source>
</evidence>
<proteinExistence type="inferred from homology"/>
<dbReference type="EMBL" id="CR380959">
    <property type="protein sequence ID" value="CAG62500.1"/>
    <property type="molecule type" value="Genomic_DNA"/>
</dbReference>
<dbReference type="RefSeq" id="XP_449524.1">
    <property type="nucleotide sequence ID" value="XM_449524.1"/>
</dbReference>
<dbReference type="SMR" id="Q6FJS0"/>
<dbReference type="FunCoup" id="Q6FJS0">
    <property type="interactions" value="256"/>
</dbReference>
<dbReference type="STRING" id="284593.Q6FJS0"/>
<dbReference type="EnsemblFungi" id="CAGL0M04081g-T">
    <property type="protein sequence ID" value="CAGL0M04081g-T-p1"/>
    <property type="gene ID" value="CAGL0M04081g"/>
</dbReference>
<dbReference type="KEGG" id="cgr:2891533"/>
<dbReference type="CGD" id="CAL0136357">
    <property type="gene designation" value="CAGL0M04081g"/>
</dbReference>
<dbReference type="VEuPathDB" id="FungiDB:B1J91_M04081g"/>
<dbReference type="VEuPathDB" id="FungiDB:CAGL0M04081g"/>
<dbReference type="eggNOG" id="KOG0284">
    <property type="taxonomic scope" value="Eukaryota"/>
</dbReference>
<dbReference type="HOGENOM" id="CLU_000288_77_0_1"/>
<dbReference type="InParanoid" id="Q6FJS0"/>
<dbReference type="OMA" id="HHWDVKS"/>
<dbReference type="Proteomes" id="UP000002428">
    <property type="component" value="Chromosome M"/>
</dbReference>
<dbReference type="GO" id="GO:0000785">
    <property type="term" value="C:chromatin"/>
    <property type="evidence" value="ECO:0007669"/>
    <property type="project" value="EnsemblFungi"/>
</dbReference>
<dbReference type="GO" id="GO:0005847">
    <property type="term" value="C:mRNA cleavage and polyadenylation specificity factor complex"/>
    <property type="evidence" value="ECO:0007669"/>
    <property type="project" value="EnsemblFungi"/>
</dbReference>
<dbReference type="GO" id="GO:0007059">
    <property type="term" value="P:chromosome segregation"/>
    <property type="evidence" value="ECO:0007669"/>
    <property type="project" value="UniProtKB-KW"/>
</dbReference>
<dbReference type="GO" id="GO:0180010">
    <property type="term" value="P:co-transcriptional mRNA 3'-end processing, cleavage and polyadenylation pathway"/>
    <property type="evidence" value="ECO:0007669"/>
    <property type="project" value="EnsemblFungi"/>
</dbReference>
<dbReference type="CDD" id="cd00200">
    <property type="entry name" value="WD40"/>
    <property type="match status" value="1"/>
</dbReference>
<dbReference type="Gene3D" id="2.130.10.10">
    <property type="entry name" value="YVTN repeat-like/Quinoprotein amine dehydrogenase"/>
    <property type="match status" value="3"/>
</dbReference>
<dbReference type="InterPro" id="IPR020472">
    <property type="entry name" value="G-protein_beta_WD-40_rep"/>
</dbReference>
<dbReference type="InterPro" id="IPR045245">
    <property type="entry name" value="Pfs2-like"/>
</dbReference>
<dbReference type="InterPro" id="IPR015943">
    <property type="entry name" value="WD40/YVTN_repeat-like_dom_sf"/>
</dbReference>
<dbReference type="InterPro" id="IPR036322">
    <property type="entry name" value="WD40_repeat_dom_sf"/>
</dbReference>
<dbReference type="InterPro" id="IPR001680">
    <property type="entry name" value="WD40_rpt"/>
</dbReference>
<dbReference type="PANTHER" id="PTHR22836:SF0">
    <property type="entry name" value="PRE-MRNA 3' END PROCESSING PROTEIN WDR33"/>
    <property type="match status" value="1"/>
</dbReference>
<dbReference type="PANTHER" id="PTHR22836">
    <property type="entry name" value="WD40 REPEAT PROTEIN"/>
    <property type="match status" value="1"/>
</dbReference>
<dbReference type="Pfam" id="PF00400">
    <property type="entry name" value="WD40"/>
    <property type="match status" value="4"/>
</dbReference>
<dbReference type="PRINTS" id="PR00320">
    <property type="entry name" value="GPROTEINBRPT"/>
</dbReference>
<dbReference type="SMART" id="SM00320">
    <property type="entry name" value="WD40"/>
    <property type="match status" value="7"/>
</dbReference>
<dbReference type="SUPFAM" id="SSF50978">
    <property type="entry name" value="WD40 repeat-like"/>
    <property type="match status" value="1"/>
</dbReference>
<dbReference type="PROSITE" id="PS50082">
    <property type="entry name" value="WD_REPEATS_2"/>
    <property type="match status" value="4"/>
</dbReference>
<dbReference type="PROSITE" id="PS50294">
    <property type="entry name" value="WD_REPEATS_REGION"/>
    <property type="match status" value="1"/>
</dbReference>